<reference key="1">
    <citation type="journal article" date="2009" name="PLoS Genet.">
        <title>Organised genome dynamics in the Escherichia coli species results in highly diverse adaptive paths.</title>
        <authorList>
            <person name="Touchon M."/>
            <person name="Hoede C."/>
            <person name="Tenaillon O."/>
            <person name="Barbe V."/>
            <person name="Baeriswyl S."/>
            <person name="Bidet P."/>
            <person name="Bingen E."/>
            <person name="Bonacorsi S."/>
            <person name="Bouchier C."/>
            <person name="Bouvet O."/>
            <person name="Calteau A."/>
            <person name="Chiapello H."/>
            <person name="Clermont O."/>
            <person name="Cruveiller S."/>
            <person name="Danchin A."/>
            <person name="Diard M."/>
            <person name="Dossat C."/>
            <person name="Karoui M.E."/>
            <person name="Frapy E."/>
            <person name="Garry L."/>
            <person name="Ghigo J.M."/>
            <person name="Gilles A.M."/>
            <person name="Johnson J."/>
            <person name="Le Bouguenec C."/>
            <person name="Lescat M."/>
            <person name="Mangenot S."/>
            <person name="Martinez-Jehanne V."/>
            <person name="Matic I."/>
            <person name="Nassif X."/>
            <person name="Oztas S."/>
            <person name="Petit M.A."/>
            <person name="Pichon C."/>
            <person name="Rouy Z."/>
            <person name="Ruf C.S."/>
            <person name="Schneider D."/>
            <person name="Tourret J."/>
            <person name="Vacherie B."/>
            <person name="Vallenet D."/>
            <person name="Medigue C."/>
            <person name="Rocha E.P.C."/>
            <person name="Denamur E."/>
        </authorList>
    </citation>
    <scope>NUCLEOTIDE SEQUENCE [LARGE SCALE GENOMIC DNA]</scope>
    <source>
        <strain>UMN026 / ExPEC</strain>
    </source>
</reference>
<comment type="function">
    <text evidence="1">Negatively regulates the transcription of the flagellar master operon flhDC by binding to the upstream region of the operon.</text>
</comment>
<comment type="similarity">
    <text evidence="2">Belongs to the LysR transcriptional regulatory family.</text>
</comment>
<evidence type="ECO:0000255" key="1">
    <source>
        <dbReference type="HAMAP-Rule" id="MF_01233"/>
    </source>
</evidence>
<evidence type="ECO:0000305" key="2"/>
<organism>
    <name type="scientific">Escherichia coli O17:K52:H18 (strain UMN026 / ExPEC)</name>
    <dbReference type="NCBI Taxonomy" id="585056"/>
    <lineage>
        <taxon>Bacteria</taxon>
        <taxon>Pseudomonadati</taxon>
        <taxon>Pseudomonadota</taxon>
        <taxon>Gammaproteobacteria</taxon>
        <taxon>Enterobacterales</taxon>
        <taxon>Enterobacteriaceae</taxon>
        <taxon>Escherichia</taxon>
    </lineage>
</organism>
<proteinExistence type="inferred from homology"/>
<feature type="chain" id="PRO_1000139667" description="HTH-type transcriptional regulator HdfR">
    <location>
        <begin position="1"/>
        <end position="279"/>
    </location>
</feature>
<feature type="domain" description="HTH lysR-type" evidence="1">
    <location>
        <begin position="1"/>
        <end position="58"/>
    </location>
</feature>
<feature type="DNA-binding region" description="H-T-H motif" evidence="1">
    <location>
        <begin position="18"/>
        <end position="37"/>
    </location>
</feature>
<dbReference type="EMBL" id="CU928163">
    <property type="protein sequence ID" value="CAR15427.1"/>
    <property type="molecule type" value="Genomic_DNA"/>
</dbReference>
<dbReference type="RefSeq" id="WP_000379230.1">
    <property type="nucleotide sequence ID" value="NC_011751.1"/>
</dbReference>
<dbReference type="RefSeq" id="YP_002414921.1">
    <property type="nucleotide sequence ID" value="NC_011751.1"/>
</dbReference>
<dbReference type="SMR" id="B7NF72"/>
<dbReference type="STRING" id="585056.ECUMN_4291"/>
<dbReference type="KEGG" id="eum:ECUMN_4291"/>
<dbReference type="PATRIC" id="fig|585056.7.peg.4458"/>
<dbReference type="HOGENOM" id="CLU_039613_8_2_6"/>
<dbReference type="Proteomes" id="UP000007097">
    <property type="component" value="Chromosome"/>
</dbReference>
<dbReference type="GO" id="GO:0003677">
    <property type="term" value="F:DNA binding"/>
    <property type="evidence" value="ECO:0007669"/>
    <property type="project" value="UniProtKB-KW"/>
</dbReference>
<dbReference type="GO" id="GO:0003700">
    <property type="term" value="F:DNA-binding transcription factor activity"/>
    <property type="evidence" value="ECO:0007669"/>
    <property type="project" value="UniProtKB-UniRule"/>
</dbReference>
<dbReference type="GO" id="GO:0045892">
    <property type="term" value="P:negative regulation of DNA-templated transcription"/>
    <property type="evidence" value="ECO:0007669"/>
    <property type="project" value="UniProtKB-UniRule"/>
</dbReference>
<dbReference type="FunFam" id="1.10.10.10:FF:000001">
    <property type="entry name" value="LysR family transcriptional regulator"/>
    <property type="match status" value="1"/>
</dbReference>
<dbReference type="Gene3D" id="3.40.190.10">
    <property type="entry name" value="Periplasmic binding protein-like II"/>
    <property type="match status" value="2"/>
</dbReference>
<dbReference type="Gene3D" id="1.10.10.10">
    <property type="entry name" value="Winged helix-like DNA-binding domain superfamily/Winged helix DNA-binding domain"/>
    <property type="match status" value="1"/>
</dbReference>
<dbReference type="HAMAP" id="MF_01233">
    <property type="entry name" value="HTH_type_HdfR"/>
    <property type="match status" value="1"/>
</dbReference>
<dbReference type="InterPro" id="IPR050176">
    <property type="entry name" value="LTTR"/>
</dbReference>
<dbReference type="InterPro" id="IPR005119">
    <property type="entry name" value="LysR_subst-bd"/>
</dbReference>
<dbReference type="InterPro" id="IPR020890">
    <property type="entry name" value="Tscrpt_reg_HTH_HdfR"/>
</dbReference>
<dbReference type="InterPro" id="IPR000847">
    <property type="entry name" value="Tscrpt_reg_HTH_LysR"/>
</dbReference>
<dbReference type="InterPro" id="IPR036388">
    <property type="entry name" value="WH-like_DNA-bd_sf"/>
</dbReference>
<dbReference type="InterPro" id="IPR036390">
    <property type="entry name" value="WH_DNA-bd_sf"/>
</dbReference>
<dbReference type="NCBIfam" id="NF002946">
    <property type="entry name" value="PRK03601.1"/>
    <property type="match status" value="1"/>
</dbReference>
<dbReference type="PANTHER" id="PTHR30579:SF8">
    <property type="entry name" value="HTH-TYPE TRANSCRIPTIONAL REGULATOR HDFR"/>
    <property type="match status" value="1"/>
</dbReference>
<dbReference type="PANTHER" id="PTHR30579">
    <property type="entry name" value="TRANSCRIPTIONAL REGULATOR"/>
    <property type="match status" value="1"/>
</dbReference>
<dbReference type="Pfam" id="PF00126">
    <property type="entry name" value="HTH_1"/>
    <property type="match status" value="1"/>
</dbReference>
<dbReference type="Pfam" id="PF03466">
    <property type="entry name" value="LysR_substrate"/>
    <property type="match status" value="1"/>
</dbReference>
<dbReference type="PRINTS" id="PR00039">
    <property type="entry name" value="HTHLYSR"/>
</dbReference>
<dbReference type="SUPFAM" id="SSF53850">
    <property type="entry name" value="Periplasmic binding protein-like II"/>
    <property type="match status" value="1"/>
</dbReference>
<dbReference type="SUPFAM" id="SSF46785">
    <property type="entry name" value="Winged helix' DNA-binding domain"/>
    <property type="match status" value="1"/>
</dbReference>
<dbReference type="PROSITE" id="PS50931">
    <property type="entry name" value="HTH_LYSR"/>
    <property type="match status" value="1"/>
</dbReference>
<protein>
    <recommendedName>
        <fullName evidence="1">HTH-type transcriptional regulator HdfR</fullName>
    </recommendedName>
    <alternativeName>
        <fullName evidence="1">H-NS-dependent flhDC regulator</fullName>
    </alternativeName>
</protein>
<name>HDFR_ECOLU</name>
<gene>
    <name evidence="1" type="primary">hdfR</name>
    <name type="ordered locus">ECUMN_4291</name>
</gene>
<sequence>MDTELLKTFLEVSRTRHFGRAAESLYLTQSAVSFRIRQLENQLGVNLFTRHRNNIRLTAAGEKLLPYAETLMSTWQAARKEVAHTSRHNEFSIGASASLWECMLNQWLGRLYKNQDAHTGLQFEARIAQRQSLVKQLHERQLDLLITTEAPKMDEFSSQLLGYFTLALYTSAPSKLKGDLNYLRLEWGPDFQQHEAGLIGADEVPILTTSSAELAQQQIATLNGCTWLPVSWARKKGGLHTVVDSTTLSRPLYAIWLQNSDKNALIRDLLKINVLDEVY</sequence>
<accession>B7NF72</accession>
<keyword id="KW-0238">DNA-binding</keyword>
<keyword id="KW-0678">Repressor</keyword>
<keyword id="KW-0804">Transcription</keyword>
<keyword id="KW-0805">Transcription regulation</keyword>